<dbReference type="EMBL" id="EU430744">
    <property type="protein sequence ID" value="ABZ91971.1"/>
    <property type="molecule type" value="mRNA"/>
</dbReference>
<dbReference type="EMBL" id="EU499336">
    <property type="protein sequence ID" value="ACD39827.1"/>
    <property type="molecule type" value="Genomic_DNA"/>
</dbReference>
<dbReference type="RefSeq" id="NP_001108237.1">
    <property type="nucleotide sequence ID" value="NM_001114765.1"/>
</dbReference>
<dbReference type="SMR" id="B1A8Z2"/>
<dbReference type="STRING" id="9940.ENSOARP00000013003"/>
<dbReference type="PaxDb" id="9940-ENSOARP00000013003"/>
<dbReference type="GeneID" id="100141300"/>
<dbReference type="KEGG" id="oas:100141300"/>
<dbReference type="CTD" id="10519"/>
<dbReference type="eggNOG" id="KOG0034">
    <property type="taxonomic scope" value="Eukaryota"/>
</dbReference>
<dbReference type="HOGENOM" id="CLU_061288_6_1_1"/>
<dbReference type="OrthoDB" id="114727at2759"/>
<dbReference type="Proteomes" id="UP000002356">
    <property type="component" value="Chromosome 18"/>
</dbReference>
<dbReference type="Bgee" id="ENSOARG00000012128">
    <property type="expression patterns" value="Expressed in descending colon and 53 other cell types or tissues"/>
</dbReference>
<dbReference type="ExpressionAtlas" id="B1A8Z2">
    <property type="expression patterns" value="baseline and differential"/>
</dbReference>
<dbReference type="GO" id="GO:0016324">
    <property type="term" value="C:apical plasma membrane"/>
    <property type="evidence" value="ECO:0007669"/>
    <property type="project" value="UniProtKB-SubCell"/>
</dbReference>
<dbReference type="GO" id="GO:0005813">
    <property type="term" value="C:centrosome"/>
    <property type="evidence" value="ECO:0007669"/>
    <property type="project" value="UniProtKB-SubCell"/>
</dbReference>
<dbReference type="GO" id="GO:0032433">
    <property type="term" value="C:filopodium tip"/>
    <property type="evidence" value="ECO:0007669"/>
    <property type="project" value="UniProtKB-SubCell"/>
</dbReference>
<dbReference type="GO" id="GO:0030426">
    <property type="term" value="C:growth cone"/>
    <property type="evidence" value="ECO:0007669"/>
    <property type="project" value="UniProtKB-SubCell"/>
</dbReference>
<dbReference type="GO" id="GO:0030027">
    <property type="term" value="C:lamellipodium"/>
    <property type="evidence" value="ECO:0007669"/>
    <property type="project" value="UniProtKB-SubCell"/>
</dbReference>
<dbReference type="GO" id="GO:0005634">
    <property type="term" value="C:nucleus"/>
    <property type="evidence" value="ECO:0007669"/>
    <property type="project" value="UniProtKB-SubCell"/>
</dbReference>
<dbReference type="GO" id="GO:0043204">
    <property type="term" value="C:perikaryon"/>
    <property type="evidence" value="ECO:0007669"/>
    <property type="project" value="UniProtKB-SubCell"/>
</dbReference>
<dbReference type="GO" id="GO:0048471">
    <property type="term" value="C:perinuclear region of cytoplasm"/>
    <property type="evidence" value="ECO:0007669"/>
    <property type="project" value="UniProtKB-SubCell"/>
</dbReference>
<dbReference type="GO" id="GO:0032587">
    <property type="term" value="C:ruffle membrane"/>
    <property type="evidence" value="ECO:0007669"/>
    <property type="project" value="UniProtKB-SubCell"/>
</dbReference>
<dbReference type="GO" id="GO:0042383">
    <property type="term" value="C:sarcolemma"/>
    <property type="evidence" value="ECO:0007669"/>
    <property type="project" value="UniProtKB-SubCell"/>
</dbReference>
<dbReference type="GO" id="GO:0005509">
    <property type="term" value="F:calcium ion binding"/>
    <property type="evidence" value="ECO:0007669"/>
    <property type="project" value="InterPro"/>
</dbReference>
<dbReference type="GO" id="GO:0000287">
    <property type="term" value="F:magnesium ion binding"/>
    <property type="evidence" value="ECO:0007669"/>
    <property type="project" value="TreeGrafter"/>
</dbReference>
<dbReference type="GO" id="GO:0043495">
    <property type="term" value="F:protein-membrane adaptor activity"/>
    <property type="evidence" value="ECO:0007669"/>
    <property type="project" value="TreeGrafter"/>
</dbReference>
<dbReference type="GO" id="GO:0001525">
    <property type="term" value="P:angiogenesis"/>
    <property type="evidence" value="ECO:0007669"/>
    <property type="project" value="UniProtKB-KW"/>
</dbReference>
<dbReference type="GO" id="GO:0006915">
    <property type="term" value="P:apoptotic process"/>
    <property type="evidence" value="ECO:0007669"/>
    <property type="project" value="UniProtKB-KW"/>
</dbReference>
<dbReference type="GO" id="GO:0007155">
    <property type="term" value="P:cell adhesion"/>
    <property type="evidence" value="ECO:0007669"/>
    <property type="project" value="UniProtKB-KW"/>
</dbReference>
<dbReference type="GO" id="GO:0030154">
    <property type="term" value="P:cell differentiation"/>
    <property type="evidence" value="ECO:0007669"/>
    <property type="project" value="UniProtKB-KW"/>
</dbReference>
<dbReference type="GO" id="GO:0051301">
    <property type="term" value="P:cell division"/>
    <property type="evidence" value="ECO:0007669"/>
    <property type="project" value="UniProtKB-KW"/>
</dbReference>
<dbReference type="GO" id="GO:0071363">
    <property type="term" value="P:cellular response to growth factor stimulus"/>
    <property type="evidence" value="ECO:0007669"/>
    <property type="project" value="TreeGrafter"/>
</dbReference>
<dbReference type="GO" id="GO:0007229">
    <property type="term" value="P:integrin-mediated signaling pathway"/>
    <property type="evidence" value="ECO:0007669"/>
    <property type="project" value="UniProtKB-KW"/>
</dbReference>
<dbReference type="GO" id="GO:0070886">
    <property type="term" value="P:positive regulation of calcineurin-NFAT signaling cascade"/>
    <property type="evidence" value="ECO:0007669"/>
    <property type="project" value="TreeGrafter"/>
</dbReference>
<dbReference type="GO" id="GO:1903078">
    <property type="term" value="P:positive regulation of protein localization to plasma membrane"/>
    <property type="evidence" value="ECO:0007669"/>
    <property type="project" value="TreeGrafter"/>
</dbReference>
<dbReference type="GO" id="GO:0007283">
    <property type="term" value="P:spermatogenesis"/>
    <property type="evidence" value="ECO:0007669"/>
    <property type="project" value="UniProtKB-KW"/>
</dbReference>
<dbReference type="CDD" id="cd00051">
    <property type="entry name" value="EFh"/>
    <property type="match status" value="1"/>
</dbReference>
<dbReference type="FunFam" id="1.10.238.10:FF:000079">
    <property type="entry name" value="Calcium and integrin-binding family member 2"/>
    <property type="match status" value="1"/>
</dbReference>
<dbReference type="Gene3D" id="1.10.238.10">
    <property type="entry name" value="EF-hand"/>
    <property type="match status" value="2"/>
</dbReference>
<dbReference type="InterPro" id="IPR051433">
    <property type="entry name" value="CIBP"/>
</dbReference>
<dbReference type="InterPro" id="IPR011992">
    <property type="entry name" value="EF-hand-dom_pair"/>
</dbReference>
<dbReference type="InterPro" id="IPR018247">
    <property type="entry name" value="EF_Hand_1_Ca_BS"/>
</dbReference>
<dbReference type="InterPro" id="IPR002048">
    <property type="entry name" value="EF_hand_dom"/>
</dbReference>
<dbReference type="PANTHER" id="PTHR45791">
    <property type="entry name" value="CALCIUM AND INTEGRIN BINDING FAMILY MEMBER 2"/>
    <property type="match status" value="1"/>
</dbReference>
<dbReference type="PANTHER" id="PTHR45791:SF3">
    <property type="entry name" value="CALCIUM AND INTEGRIN-BINDING PROTEIN 1"/>
    <property type="match status" value="1"/>
</dbReference>
<dbReference type="Pfam" id="PF13499">
    <property type="entry name" value="EF-hand_7"/>
    <property type="match status" value="1"/>
</dbReference>
<dbReference type="SMART" id="SM00054">
    <property type="entry name" value="EFh"/>
    <property type="match status" value="2"/>
</dbReference>
<dbReference type="SUPFAM" id="SSF47473">
    <property type="entry name" value="EF-hand"/>
    <property type="match status" value="1"/>
</dbReference>
<dbReference type="PROSITE" id="PS00018">
    <property type="entry name" value="EF_HAND_1"/>
    <property type="match status" value="2"/>
</dbReference>
<dbReference type="PROSITE" id="PS50222">
    <property type="entry name" value="EF_HAND_2"/>
    <property type="match status" value="2"/>
</dbReference>
<reference key="1">
    <citation type="journal article" date="2009" name="Mol. Biol. Rep.">
        <title>Molecular characterization of the sheep CIB1 gene.</title>
        <authorList>
            <person name="Yu Y."/>
            <person name="Song X."/>
            <person name="Du L."/>
            <person name="Wang C."/>
        </authorList>
    </citation>
    <scope>NUCLEOTIDE SEQUENCE [GENOMIC DNA / MRNA]</scope>
    <scope>TISSUE SPECIFICITY</scope>
    <source>
        <tissue>Testis</tissue>
    </source>
</reference>
<sequence>MGGSGSRLSKELLAEYQDLTFLTKQEILLAHRRFCELLPQEHRSVEESLQARVSLEQILSLPELKANPFKERICKVFSTSPSRDSLSFEDFLDLLSVFSDTATPDIKSHYAFRIFDFDDDGTLNREDLSQLVNCLTGESEDTRLSASEMKQLIDNILEESDIDRDGTINLSEFQHVISRSPDFASSFKIVL</sequence>
<keyword id="KW-0037">Angiogenesis</keyword>
<keyword id="KW-0053">Apoptosis</keyword>
<keyword id="KW-0106">Calcium</keyword>
<keyword id="KW-0130">Cell adhesion</keyword>
<keyword id="KW-0131">Cell cycle</keyword>
<keyword id="KW-0132">Cell division</keyword>
<keyword id="KW-1003">Cell membrane</keyword>
<keyword id="KW-0966">Cell projection</keyword>
<keyword id="KW-0963">Cytoplasm</keyword>
<keyword id="KW-0206">Cytoskeleton</keyword>
<keyword id="KW-0221">Differentiation</keyword>
<keyword id="KW-0401">Integrin</keyword>
<keyword id="KW-0449">Lipoprotein</keyword>
<keyword id="KW-0460">Magnesium</keyword>
<keyword id="KW-0472">Membrane</keyword>
<keyword id="KW-0479">Metal-binding</keyword>
<keyword id="KW-0519">Myristate</keyword>
<keyword id="KW-0539">Nucleus</keyword>
<keyword id="KW-1185">Reference proteome</keyword>
<keyword id="KW-0677">Repeat</keyword>
<keyword id="KW-0744">Spermatogenesis</keyword>
<organism>
    <name type="scientific">Ovis aries</name>
    <name type="common">Sheep</name>
    <dbReference type="NCBI Taxonomy" id="9940"/>
    <lineage>
        <taxon>Eukaryota</taxon>
        <taxon>Metazoa</taxon>
        <taxon>Chordata</taxon>
        <taxon>Craniata</taxon>
        <taxon>Vertebrata</taxon>
        <taxon>Euteleostomi</taxon>
        <taxon>Mammalia</taxon>
        <taxon>Eutheria</taxon>
        <taxon>Laurasiatheria</taxon>
        <taxon>Artiodactyla</taxon>
        <taxon>Ruminantia</taxon>
        <taxon>Pecora</taxon>
        <taxon>Bovidae</taxon>
        <taxon>Caprinae</taxon>
        <taxon>Ovis</taxon>
    </lineage>
</organism>
<gene>
    <name type="primary">CIB1</name>
</gene>
<protein>
    <recommendedName>
        <fullName>Calcium and integrin-binding protein 1</fullName>
    </recommendedName>
    <alternativeName>
        <fullName>Calmyrin</fullName>
    </alternativeName>
</protein>
<feature type="initiator methionine" description="Removed" evidence="3">
    <location>
        <position position="1"/>
    </location>
</feature>
<feature type="chain" id="PRO_0000425743" description="Calcium and integrin-binding protein 1">
    <location>
        <begin position="2"/>
        <end position="191"/>
    </location>
</feature>
<feature type="domain" description="EF-hand 1" evidence="4">
    <location>
        <begin position="103"/>
        <end position="138"/>
    </location>
</feature>
<feature type="domain" description="EF-hand 2" evidence="4">
    <location>
        <begin position="148"/>
        <end position="183"/>
    </location>
</feature>
<feature type="binding site" evidence="4">
    <location>
        <position position="116"/>
    </location>
    <ligand>
        <name>Ca(2+)</name>
        <dbReference type="ChEBI" id="CHEBI:29108"/>
        <label>1</label>
    </ligand>
</feature>
<feature type="binding site" evidence="4">
    <location>
        <position position="118"/>
    </location>
    <ligand>
        <name>Ca(2+)</name>
        <dbReference type="ChEBI" id="CHEBI:29108"/>
        <label>1</label>
    </ligand>
</feature>
<feature type="binding site" evidence="4">
    <location>
        <position position="120"/>
    </location>
    <ligand>
        <name>Ca(2+)</name>
        <dbReference type="ChEBI" id="CHEBI:29108"/>
        <label>1</label>
    </ligand>
</feature>
<feature type="binding site" evidence="4">
    <location>
        <position position="122"/>
    </location>
    <ligand>
        <name>Ca(2+)</name>
        <dbReference type="ChEBI" id="CHEBI:29108"/>
        <label>1</label>
    </ligand>
</feature>
<feature type="binding site" evidence="4">
    <location>
        <position position="127"/>
    </location>
    <ligand>
        <name>Ca(2+)</name>
        <dbReference type="ChEBI" id="CHEBI:29108"/>
        <label>1</label>
    </ligand>
</feature>
<feature type="binding site" evidence="4">
    <location>
        <position position="161"/>
    </location>
    <ligand>
        <name>Ca(2+)</name>
        <dbReference type="ChEBI" id="CHEBI:29108"/>
        <label>2</label>
    </ligand>
</feature>
<feature type="binding site" evidence="4">
    <location>
        <position position="163"/>
    </location>
    <ligand>
        <name>Ca(2+)</name>
        <dbReference type="ChEBI" id="CHEBI:29108"/>
        <label>2</label>
    </ligand>
</feature>
<feature type="binding site" evidence="4">
    <location>
        <position position="165"/>
    </location>
    <ligand>
        <name>Ca(2+)</name>
        <dbReference type="ChEBI" id="CHEBI:29108"/>
        <label>2</label>
    </ligand>
</feature>
<feature type="binding site" evidence="4">
    <location>
        <position position="167"/>
    </location>
    <ligand>
        <name>Ca(2+)</name>
        <dbReference type="ChEBI" id="CHEBI:29108"/>
        <label>2</label>
    </ligand>
</feature>
<feature type="binding site" evidence="4">
    <location>
        <position position="172"/>
    </location>
    <ligand>
        <name>Ca(2+)</name>
        <dbReference type="ChEBI" id="CHEBI:29108"/>
        <label>2</label>
    </ligand>
</feature>
<feature type="lipid moiety-binding region" description="N-myristoyl glycine" evidence="3">
    <location>
        <position position="2"/>
    </location>
</feature>
<name>CIB1_SHEEP</name>
<evidence type="ECO:0000250" key="1"/>
<evidence type="ECO:0000250" key="2">
    <source>
        <dbReference type="UniProtKB" id="Q99828"/>
    </source>
</evidence>
<evidence type="ECO:0000255" key="3"/>
<evidence type="ECO:0000255" key="4">
    <source>
        <dbReference type="PROSITE-ProRule" id="PRU00448"/>
    </source>
</evidence>
<evidence type="ECO:0000269" key="5">
    <source>
    </source>
</evidence>
<proteinExistence type="evidence at transcript level"/>
<comment type="function">
    <text evidence="1 2">Calcium-binding protein that plays a role in the regulation of numerous cellular processes, such as cell differentiation, cell division, cell proliferation, cell migration, thrombosis, angiogenesis, cardiac hypertrophy and apoptosis. Involved in bone marrow megakaryocyte differentiation by negatively regulating thrombopoietin-mediated signaling pathway. Participates in the endomitotic cell cycle of megakaryocyte, a form of mitosis in which both karyokinesis and cytokinesis are interrupted. Plays a role in integrin signaling by negatively regulating alpha-IIb/beta3 activation in thrombin-stimulated megakaryocytes preventing platelet aggregation. Up-regulates PTK2/FAK1 activity, and is also needed for the recruitment of PTK2/FAK1 to focal adhesions; it thus appears to play an important role in focal adhesion formation. Positively regulates cell migration on fibronectin in a CDC42-dependent manner, the effect being negatively regulated by PAK1. Functions as a negative regulator of stress activated MAP kinase (MAPK) signaling pathways. Down-regulates inositol 1,4,5-trisphosphate receptor-dependent calcium signaling. Involved in sphingosine kinase SPHK1 translocation to the plasma membrane in a N-myristoylation-dependent manner preventing TNF-alpha-induced apoptosis. Regulates serine/threonine-protein kinase PLK3 activity for proper completion of cell division progression. Plays a role in microtubule (MT) dynamics during neuronal development; disrupts the MT depolymerization activity of STMN2 attenuating NGF-induced neurite outgrowth and the MT reorganization at the edge of lamellipodia. Promotes cardiomyocyte hypertrophy via activation of the calcineurin/NFAT signaling pathway. Stimulates calcineurin PPP3R1 activity by mediating its anchoring to the sarcolemma. In ischemia-induced (pathological or adaptive) angiogenesis, stimulates endothelial cell proliferation, migration and microvessel formation by activating the PAK1 and ERK1/ERK2 signaling pathway. Also promotes cancer cell survival and proliferation. May regulate cell cycle and differentiation of spermatogenic germ cells, and/or differentiation of supporting Sertoli cells (By similarity). Forms a complex with TMC6/EVER1 and TMC8/EVER2 in lymphocytes and keratynocytes where CIB1 stabilizes TMC6 and TMC8 levels and reciprocally (By similarity).</text>
</comment>
<comment type="subunit">
    <text evidence="1 2">Monomer. Interacts with the heterodimeric integrin alpha-IIb/beta3 (ITGA2B-ITGB3). Interacts with ITGA2B (via cytoplasmic domain); the interaction is direct and calcium-dependent. Interacts with the protein kinases PLK2/SNK and PRKDC (via the region immediately upstream of the kinase domain). Interacts with PLK3; the interaction inhibits PLK3 kinase activity. Interacts with PSEN2. Interacts (via C-terminus) with F8. Interacts with NBR1 (via C-terminus). Interacts with FEZ1 (via C-terminus). Interacts with UBR5 (via C-terminus); the interaction is sensitive to DNA damage, and may target CIB1 for ubiquitin-mediated degradation. Interacts with IFI6; the interaction is direct. Interacts with BCL2. Interacts with ITPR3; the interaction occurs in a calcium dependent manner. Interacts with PTK2/FAK1. Interacts with MAP3K5; the interaction inhibits MAP3K5 activation by phosphorylation, and its subsequent interaction with TRAF2. Interacts (via C-terminal region) with STMN2 (via the N-terminal region); the interaction is direct, occurs in a calcium-dependent manner and attenuates the STMN2-induced neurite outgrowth inhibition. Interacts with SPHK1, the interaction occurs in a calcium-dependent manner. Interacts with ITGA2B (via C-terminal cytoplasmic tail); the interaction occurs upon platelet aggregation and is stabilized/increased in a calcium and magnesium-dependent manner. Interacts with PAK1 (via N-terminal region); the interaction is direct and occurs in a calcium-dependent manner. Interacts with RAC3 (via C-terminal region); the interaction induces their association with the cytoskeleton upon alpha-IIb/beta3 integrin-mediated adhesion. Interacts with ITGA5 and ITGAV. Interacts with MYO1C. Interacts with ITGA2B (via C-terminal cytoplasmic tail region). Interacts (via C-terminal region) with PPP3R1; the interaction increases upon cardiomyocytes hypertrophy. Interacts with CACNA1C; the interaction increases upon cardiomyocytes hypertrophy. Interacts with TAS1R2 (via C-terminus); this interaction is independent of the myristoylation state of CIB1 (By similarity). Interacts and forms a complex with TMC6 and TMC8; the interaction stabilizes each component of the complex (By similarity).</text>
</comment>
<comment type="subcellular location">
    <subcellularLocation>
        <location evidence="2">Membrane</location>
        <topology evidence="2">Lipid-anchor</topology>
    </subcellularLocation>
    <subcellularLocation>
        <location evidence="2">Cell membrane</location>
        <location evidence="2">Sarcolemma</location>
    </subcellularLocation>
    <subcellularLocation>
        <location evidence="2">Cell membrane</location>
    </subcellularLocation>
    <subcellularLocation>
        <location evidence="2">Apical cell membrane</location>
    </subcellularLocation>
    <subcellularLocation>
        <location evidence="2">Cell projection</location>
        <location evidence="2">Ruffle membrane</location>
    </subcellularLocation>
    <subcellularLocation>
        <location evidence="2">Cell projection</location>
        <location evidence="2">Filopodium tip</location>
    </subcellularLocation>
    <subcellularLocation>
        <location evidence="2">Cell projection</location>
        <location evidence="2">Growth cone</location>
    </subcellularLocation>
    <subcellularLocation>
        <location evidence="2">Cell projection</location>
        <location evidence="2">Lamellipodium</location>
    </subcellularLocation>
    <subcellularLocation>
        <location evidence="2">Cytoplasm</location>
    </subcellularLocation>
    <subcellularLocation>
        <location evidence="2">Cytoplasm</location>
        <location evidence="2">Cytoskeleton</location>
    </subcellularLocation>
    <subcellularLocation>
        <location evidence="2">Cytoplasm</location>
        <location evidence="2">Cytoskeleton</location>
        <location evidence="2">Microtubule organizing center</location>
        <location evidence="2">Centrosome</location>
    </subcellularLocation>
    <subcellularLocation>
        <location evidence="2">Cytoplasm</location>
        <location evidence="2">Perinuclear region</location>
    </subcellularLocation>
    <subcellularLocation>
        <location evidence="2">Nucleus</location>
    </subcellularLocation>
    <subcellularLocation>
        <location evidence="2">Cell projection</location>
        <location evidence="2">Neuron projection</location>
    </subcellularLocation>
    <subcellularLocation>
        <location evidence="2">Perikaryon</location>
    </subcellularLocation>
    <text evidence="1">Colocalized with PPP3R1 at the cell membrane of cardiomyocytes in the hypertrophic heart (By similarity). Colocalized with NBR1 to the perinuclear region. Colocalizes with TAS1R2 in apical regions of taste receptor cells. Colocalized with RAC3 in the perinuclear area and at the cell periphery. Colocalized with PAK1 within membrane ruffles during cell spreading upon readhesion to fibronectin. Redistributed to the cytoskeleton upon platelet aggregation. Translocates from the cytosol to the plasma membrane in a calcium-dependent manner. Colocalized with PLK3 at centrosomes in ductal breast carcinoma cells.</text>
</comment>
<comment type="tissue specificity">
    <text evidence="5">Expressed strongly in testis. Expressed weakly in liver, kidney and spleen.</text>
</comment>
<comment type="domain">
    <text evidence="1">The EF-hands may also bind magnesium ions in the presence of high Mg(2+) levels and low Ca(2+) levels.</text>
</comment>
<comment type="miscellaneous">
    <text evidence="1">The binding of either calcium or magnesium significantly increases the structural stability of the protein in comparison to apo-CIB (calcium- and magnesium-free form).</text>
</comment>
<accession>B1A8Z2</accession>